<accession>Q2FX88</accession>
<gene>
    <name evidence="1" type="primary">queG</name>
    <name type="ordered locus">SAOUHSC_01989</name>
</gene>
<comment type="function">
    <text evidence="1">Catalyzes the conversion of epoxyqueuosine (oQ) to queuosine (Q), which is a hypermodified base found in the wobble positions of tRNA(Asp), tRNA(Asn), tRNA(His) and tRNA(Tyr).</text>
</comment>
<comment type="catalytic activity">
    <reaction evidence="1">
        <text>epoxyqueuosine(34) in tRNA + AH2 = queuosine(34) in tRNA + A + H2O</text>
        <dbReference type="Rhea" id="RHEA:32159"/>
        <dbReference type="Rhea" id="RHEA-COMP:18571"/>
        <dbReference type="Rhea" id="RHEA-COMP:18582"/>
        <dbReference type="ChEBI" id="CHEBI:13193"/>
        <dbReference type="ChEBI" id="CHEBI:15377"/>
        <dbReference type="ChEBI" id="CHEBI:17499"/>
        <dbReference type="ChEBI" id="CHEBI:194431"/>
        <dbReference type="ChEBI" id="CHEBI:194443"/>
        <dbReference type="EC" id="1.17.99.6"/>
    </reaction>
</comment>
<comment type="cofactor">
    <cofactor evidence="1">
        <name>cob(II)alamin</name>
        <dbReference type="ChEBI" id="CHEBI:16304"/>
    </cofactor>
</comment>
<comment type="cofactor">
    <cofactor evidence="1">
        <name>[4Fe-4S] cluster</name>
        <dbReference type="ChEBI" id="CHEBI:49883"/>
    </cofactor>
    <text evidence="1">Binds 2 [4Fe-4S] clusters per monomer.</text>
</comment>
<comment type="pathway">
    <text evidence="1">tRNA modification; tRNA-queuosine biosynthesis.</text>
</comment>
<comment type="subunit">
    <text evidence="1">Monomer.</text>
</comment>
<comment type="subcellular location">
    <subcellularLocation>
        <location evidence="1">Cytoplasm</location>
    </subcellularLocation>
</comment>
<comment type="similarity">
    <text evidence="1">Belongs to the QueG family.</text>
</comment>
<protein>
    <recommendedName>
        <fullName evidence="1">Epoxyqueuosine reductase</fullName>
        <ecNumber evidence="1">1.17.99.6</ecNumber>
    </recommendedName>
    <alternativeName>
        <fullName evidence="1">Queuosine biosynthesis protein QueG</fullName>
    </alternativeName>
</protein>
<reference key="1">
    <citation type="book" date="2006" name="Gram positive pathogens, 2nd edition">
        <title>The Staphylococcus aureus NCTC 8325 genome.</title>
        <editorList>
            <person name="Fischetti V."/>
            <person name="Novick R."/>
            <person name="Ferretti J."/>
            <person name="Portnoy D."/>
            <person name="Rood J."/>
        </editorList>
        <authorList>
            <person name="Gillaspy A.F."/>
            <person name="Worrell V."/>
            <person name="Orvis J."/>
            <person name="Roe B.A."/>
            <person name="Dyer D.W."/>
            <person name="Iandolo J.J."/>
        </authorList>
    </citation>
    <scope>NUCLEOTIDE SEQUENCE [LARGE SCALE GENOMIC DNA]</scope>
    <source>
        <strain>NCTC 8325 / PS 47</strain>
    </source>
</reference>
<organism>
    <name type="scientific">Staphylococcus aureus (strain NCTC 8325 / PS 47)</name>
    <dbReference type="NCBI Taxonomy" id="93061"/>
    <lineage>
        <taxon>Bacteria</taxon>
        <taxon>Bacillati</taxon>
        <taxon>Bacillota</taxon>
        <taxon>Bacilli</taxon>
        <taxon>Bacillales</taxon>
        <taxon>Staphylococcaceae</taxon>
        <taxon>Staphylococcus</taxon>
    </lineage>
</organism>
<name>QUEG_STAA8</name>
<feature type="chain" id="PRO_0000416082" description="Epoxyqueuosine reductase">
    <location>
        <begin position="1"/>
        <end position="380"/>
    </location>
</feature>
<feature type="domain" description="4Fe-4S ferredoxin-type 1" evidence="1">
    <location>
        <begin position="181"/>
        <end position="213"/>
    </location>
</feature>
<feature type="domain" description="4Fe-4S ferredoxin-type 2" evidence="1">
    <location>
        <begin position="234"/>
        <end position="263"/>
    </location>
</feature>
<feature type="active site" description="Proton donor" evidence="1">
    <location>
        <position position="139"/>
    </location>
</feature>
<feature type="binding site" evidence="1">
    <location>
        <position position="193"/>
    </location>
    <ligand>
        <name>[4Fe-4S] cluster</name>
        <dbReference type="ChEBI" id="CHEBI:49883"/>
        <label>1</label>
    </ligand>
</feature>
<feature type="binding site" evidence="1">
    <location>
        <position position="196"/>
    </location>
    <ligand>
        <name>[4Fe-4S] cluster</name>
        <dbReference type="ChEBI" id="CHEBI:49883"/>
        <label>1</label>
    </ligand>
</feature>
<feature type="binding site" evidence="1">
    <location>
        <position position="199"/>
    </location>
    <ligand>
        <name>[4Fe-4S] cluster</name>
        <dbReference type="ChEBI" id="CHEBI:49883"/>
        <label>1</label>
    </ligand>
</feature>
<feature type="binding site" evidence="1">
    <location>
        <position position="203"/>
    </location>
    <ligand>
        <name>[4Fe-4S] cluster</name>
        <dbReference type="ChEBI" id="CHEBI:49883"/>
        <label>2</label>
    </ligand>
</feature>
<feature type="binding site" evidence="1">
    <location>
        <position position="219"/>
    </location>
    <ligand>
        <name>[4Fe-4S] cluster</name>
        <dbReference type="ChEBI" id="CHEBI:49883"/>
        <label>2</label>
    </ligand>
</feature>
<feature type="binding site" evidence="1">
    <location>
        <position position="245"/>
    </location>
    <ligand>
        <name>[4Fe-4S] cluster</name>
        <dbReference type="ChEBI" id="CHEBI:49883"/>
        <label>2</label>
    </ligand>
</feature>
<feature type="binding site" evidence="1">
    <location>
        <position position="248"/>
    </location>
    <ligand>
        <name>[4Fe-4S] cluster</name>
        <dbReference type="ChEBI" id="CHEBI:49883"/>
        <label>2</label>
    </ligand>
</feature>
<feature type="binding site" evidence="1">
    <location>
        <position position="252"/>
    </location>
    <ligand>
        <name>[4Fe-4S] cluster</name>
        <dbReference type="ChEBI" id="CHEBI:49883"/>
        <label>1</label>
    </ligand>
</feature>
<proteinExistence type="inferred from homology"/>
<sequence>MGGIRLDTKQLKQDIIDYAYTIGIDSIGFTTADPFDELKQKLEAYHANGYASGFEESDIALRTEPKLSLPTARSIIAIAVGYPNKLKGAPKSVRGDRRGLFARASWGQDYHTIMRKRLDMLAAFIESKVPDVEIKSMVDTGVLSDRAVAERAGLGFVGRNGFVINPKLGTWTYLGEMLVSIPFEPDDPLLDSCGDCTICVDRCPTSALVGNGQLNSQKCISFLTQTKGYMPDQYRYKIGNRLYGCDTCQQVCPKNRGINTEQDDIILEPEILKPRLVPLLRMSNKEFKQTYGHLAGAWRGKKPIQRNAILALAHFNEVDAIPELKKVATTDERPLIRATAYWAIGQILGEEARDFINANYDQEDAEVQNEMIKGLDTRRE</sequence>
<dbReference type="EC" id="1.17.99.6" evidence="1"/>
<dbReference type="EMBL" id="CP000253">
    <property type="protein sequence ID" value="ABD31048.1"/>
    <property type="molecule type" value="Genomic_DNA"/>
</dbReference>
<dbReference type="RefSeq" id="WP_001789049.1">
    <property type="nucleotide sequence ID" value="NC_007795.1"/>
</dbReference>
<dbReference type="RefSeq" id="YP_500486.1">
    <property type="nucleotide sequence ID" value="NC_007795.1"/>
</dbReference>
<dbReference type="SMR" id="Q2FX88"/>
<dbReference type="STRING" id="93061.SAOUHSC_01989"/>
<dbReference type="PaxDb" id="1280-SAXN108_1885"/>
<dbReference type="GeneID" id="3921872"/>
<dbReference type="KEGG" id="sao:SAOUHSC_01989"/>
<dbReference type="PATRIC" id="fig|93061.5.peg.1809"/>
<dbReference type="eggNOG" id="COG1600">
    <property type="taxonomic scope" value="Bacteria"/>
</dbReference>
<dbReference type="HOGENOM" id="CLU_030790_2_0_9"/>
<dbReference type="OrthoDB" id="9784571at2"/>
<dbReference type="UniPathway" id="UPA00392"/>
<dbReference type="Proteomes" id="UP000008816">
    <property type="component" value="Chromosome"/>
</dbReference>
<dbReference type="GO" id="GO:0005737">
    <property type="term" value="C:cytoplasm"/>
    <property type="evidence" value="ECO:0007669"/>
    <property type="project" value="UniProtKB-SubCell"/>
</dbReference>
<dbReference type="GO" id="GO:0051539">
    <property type="term" value="F:4 iron, 4 sulfur cluster binding"/>
    <property type="evidence" value="ECO:0007669"/>
    <property type="project" value="UniProtKB-KW"/>
</dbReference>
<dbReference type="GO" id="GO:0052693">
    <property type="term" value="F:epoxyqueuosine reductase activity"/>
    <property type="evidence" value="ECO:0000318"/>
    <property type="project" value="GO_Central"/>
</dbReference>
<dbReference type="GO" id="GO:0046872">
    <property type="term" value="F:metal ion binding"/>
    <property type="evidence" value="ECO:0007669"/>
    <property type="project" value="UniProtKB-KW"/>
</dbReference>
<dbReference type="GO" id="GO:0008616">
    <property type="term" value="P:queuosine biosynthetic process"/>
    <property type="evidence" value="ECO:0000318"/>
    <property type="project" value="GO_Central"/>
</dbReference>
<dbReference type="GO" id="GO:0006400">
    <property type="term" value="P:tRNA modification"/>
    <property type="evidence" value="ECO:0007669"/>
    <property type="project" value="UniProtKB-UniRule"/>
</dbReference>
<dbReference type="FunFam" id="3.30.70.20:FF:000037">
    <property type="entry name" value="Epoxyqueuosine reductase"/>
    <property type="match status" value="1"/>
</dbReference>
<dbReference type="Gene3D" id="3.30.70.20">
    <property type="match status" value="1"/>
</dbReference>
<dbReference type="Gene3D" id="1.25.10.10">
    <property type="entry name" value="Leucine-rich Repeat Variant"/>
    <property type="match status" value="1"/>
</dbReference>
<dbReference type="HAMAP" id="MF_00916">
    <property type="entry name" value="QueG"/>
    <property type="match status" value="1"/>
</dbReference>
<dbReference type="InterPro" id="IPR017896">
    <property type="entry name" value="4Fe4S_Fe-S-bd"/>
</dbReference>
<dbReference type="InterPro" id="IPR017900">
    <property type="entry name" value="4Fe4S_Fe_S_CS"/>
</dbReference>
<dbReference type="InterPro" id="IPR011989">
    <property type="entry name" value="ARM-like"/>
</dbReference>
<dbReference type="InterPro" id="IPR016024">
    <property type="entry name" value="ARM-type_fold"/>
</dbReference>
<dbReference type="InterPro" id="IPR004453">
    <property type="entry name" value="QueG"/>
</dbReference>
<dbReference type="InterPro" id="IPR013542">
    <property type="entry name" value="QueG_DUF1730"/>
</dbReference>
<dbReference type="NCBIfam" id="TIGR00276">
    <property type="entry name" value="tRNA epoxyqueuosine(34) reductase QueG"/>
    <property type="match status" value="1"/>
</dbReference>
<dbReference type="PANTHER" id="PTHR30002">
    <property type="entry name" value="EPOXYQUEUOSINE REDUCTASE"/>
    <property type="match status" value="1"/>
</dbReference>
<dbReference type="PANTHER" id="PTHR30002:SF4">
    <property type="entry name" value="EPOXYQUEUOSINE REDUCTASE"/>
    <property type="match status" value="1"/>
</dbReference>
<dbReference type="Pfam" id="PF13484">
    <property type="entry name" value="Fer4_16"/>
    <property type="match status" value="1"/>
</dbReference>
<dbReference type="Pfam" id="PF13646">
    <property type="entry name" value="HEAT_2"/>
    <property type="match status" value="1"/>
</dbReference>
<dbReference type="Pfam" id="PF08331">
    <property type="entry name" value="QueG_DUF1730"/>
    <property type="match status" value="1"/>
</dbReference>
<dbReference type="SUPFAM" id="SSF54862">
    <property type="entry name" value="4Fe-4S ferredoxins"/>
    <property type="match status" value="1"/>
</dbReference>
<dbReference type="SUPFAM" id="SSF48371">
    <property type="entry name" value="ARM repeat"/>
    <property type="match status" value="1"/>
</dbReference>
<dbReference type="PROSITE" id="PS00198">
    <property type="entry name" value="4FE4S_FER_1"/>
    <property type="match status" value="1"/>
</dbReference>
<dbReference type="PROSITE" id="PS51379">
    <property type="entry name" value="4FE4S_FER_2"/>
    <property type="match status" value="2"/>
</dbReference>
<evidence type="ECO:0000255" key="1">
    <source>
        <dbReference type="HAMAP-Rule" id="MF_00916"/>
    </source>
</evidence>
<keyword id="KW-0004">4Fe-4S</keyword>
<keyword id="KW-0963">Cytoplasm</keyword>
<keyword id="KW-0408">Iron</keyword>
<keyword id="KW-0411">Iron-sulfur</keyword>
<keyword id="KW-0479">Metal-binding</keyword>
<keyword id="KW-0560">Oxidoreductase</keyword>
<keyword id="KW-0671">Queuosine biosynthesis</keyword>
<keyword id="KW-1185">Reference proteome</keyword>
<keyword id="KW-0677">Repeat</keyword>
<keyword id="KW-0819">tRNA processing</keyword>